<gene>
    <name evidence="1" type="primary">trpD</name>
    <name type="ordered locus">APP7_1223</name>
</gene>
<accession>B3GY52</accession>
<proteinExistence type="inferred from homology"/>
<name>TRPD_ACTP7</name>
<organism>
    <name type="scientific">Actinobacillus pleuropneumoniae serotype 7 (strain AP76)</name>
    <dbReference type="NCBI Taxonomy" id="537457"/>
    <lineage>
        <taxon>Bacteria</taxon>
        <taxon>Pseudomonadati</taxon>
        <taxon>Pseudomonadota</taxon>
        <taxon>Gammaproteobacteria</taxon>
        <taxon>Pasteurellales</taxon>
        <taxon>Pasteurellaceae</taxon>
        <taxon>Actinobacillus</taxon>
    </lineage>
</organism>
<evidence type="ECO:0000255" key="1">
    <source>
        <dbReference type="HAMAP-Rule" id="MF_00211"/>
    </source>
</evidence>
<sequence>MQLDNILSQLFENQALTKAESQYFFEQVIQGNVSNEQLAGALIALKVRGETIEEIAGAVEAAFANATAFPAPDYAFADIVGTGGDGQNTINISTASAIVAATLGYKVAKHGSRSVSSKTGASDVLSALGINVAISPQTARQALDENNLCFLFAPLYHAGFKHAVPVRQVLKTRTLFNILGPLVNPAHAKRQLLGVYSPEVLKIYAETVRSLNHQHSIVVHGAGLDEVTVHGETLVAEIEHGEIHYFSLTPEDFGIQRHSIEALKGGEPAENAEKITALLQGKGEAAHIDAVAVNTAMLMRTFGERDLKANVQRVKDLLSTDKAYQTLQNLAQYQ</sequence>
<comment type="function">
    <text evidence="1">Catalyzes the transfer of the phosphoribosyl group of 5-phosphorylribose-1-pyrophosphate (PRPP) to anthranilate to yield N-(5'-phosphoribosyl)-anthranilate (PRA).</text>
</comment>
<comment type="catalytic activity">
    <reaction evidence="1">
        <text>N-(5-phospho-beta-D-ribosyl)anthranilate + diphosphate = 5-phospho-alpha-D-ribose 1-diphosphate + anthranilate</text>
        <dbReference type="Rhea" id="RHEA:11768"/>
        <dbReference type="ChEBI" id="CHEBI:16567"/>
        <dbReference type="ChEBI" id="CHEBI:18277"/>
        <dbReference type="ChEBI" id="CHEBI:33019"/>
        <dbReference type="ChEBI" id="CHEBI:58017"/>
        <dbReference type="EC" id="2.4.2.18"/>
    </reaction>
</comment>
<comment type="cofactor">
    <cofactor evidence="1">
        <name>Mg(2+)</name>
        <dbReference type="ChEBI" id="CHEBI:18420"/>
    </cofactor>
    <text evidence="1">Binds 2 magnesium ions per monomer.</text>
</comment>
<comment type="pathway">
    <text evidence="1">Amino-acid biosynthesis; L-tryptophan biosynthesis; L-tryptophan from chorismate: step 2/5.</text>
</comment>
<comment type="subunit">
    <text evidence="1">Homodimer.</text>
</comment>
<comment type="similarity">
    <text evidence="1">Belongs to the anthranilate phosphoribosyltransferase family.</text>
</comment>
<reference key="1">
    <citation type="submission" date="2008-06" db="EMBL/GenBank/DDBJ databases">
        <title>Genome and proteome analysis of A. pleuropneumoniae serotype 7.</title>
        <authorList>
            <person name="Linke B."/>
            <person name="Buettner F."/>
            <person name="Martinez-Arias R."/>
            <person name="Goesmann A."/>
            <person name="Baltes N."/>
            <person name="Tegetmeyer H."/>
            <person name="Singh M."/>
            <person name="Gerlach G.F."/>
        </authorList>
    </citation>
    <scope>NUCLEOTIDE SEQUENCE [LARGE SCALE GENOMIC DNA]</scope>
    <source>
        <strain>AP76</strain>
    </source>
</reference>
<protein>
    <recommendedName>
        <fullName evidence="1">Anthranilate phosphoribosyltransferase</fullName>
        <ecNumber evidence="1">2.4.2.18</ecNumber>
    </recommendedName>
</protein>
<feature type="chain" id="PRO_1000099775" description="Anthranilate phosphoribosyltransferase">
    <location>
        <begin position="1"/>
        <end position="334"/>
    </location>
</feature>
<feature type="binding site" evidence="1">
    <location>
        <position position="81"/>
    </location>
    <ligand>
        <name>5-phospho-alpha-D-ribose 1-diphosphate</name>
        <dbReference type="ChEBI" id="CHEBI:58017"/>
    </ligand>
</feature>
<feature type="binding site" evidence="1">
    <location>
        <position position="81"/>
    </location>
    <ligand>
        <name>anthranilate</name>
        <dbReference type="ChEBI" id="CHEBI:16567"/>
        <label>1</label>
    </ligand>
</feature>
<feature type="binding site" evidence="1">
    <location>
        <begin position="84"/>
        <end position="85"/>
    </location>
    <ligand>
        <name>5-phospho-alpha-D-ribose 1-diphosphate</name>
        <dbReference type="ChEBI" id="CHEBI:58017"/>
    </ligand>
</feature>
<feature type="binding site" evidence="1">
    <location>
        <position position="89"/>
    </location>
    <ligand>
        <name>5-phospho-alpha-D-ribose 1-diphosphate</name>
        <dbReference type="ChEBI" id="CHEBI:58017"/>
    </ligand>
</feature>
<feature type="binding site" evidence="1">
    <location>
        <begin position="91"/>
        <end position="94"/>
    </location>
    <ligand>
        <name>5-phospho-alpha-D-ribose 1-diphosphate</name>
        <dbReference type="ChEBI" id="CHEBI:58017"/>
    </ligand>
</feature>
<feature type="binding site" evidence="1">
    <location>
        <position position="93"/>
    </location>
    <ligand>
        <name>Mg(2+)</name>
        <dbReference type="ChEBI" id="CHEBI:18420"/>
        <label>1</label>
    </ligand>
</feature>
<feature type="binding site" evidence="1">
    <location>
        <begin position="109"/>
        <end position="117"/>
    </location>
    <ligand>
        <name>5-phospho-alpha-D-ribose 1-diphosphate</name>
        <dbReference type="ChEBI" id="CHEBI:58017"/>
    </ligand>
</feature>
<feature type="binding site" evidence="1">
    <location>
        <position position="121"/>
    </location>
    <ligand>
        <name>5-phospho-alpha-D-ribose 1-diphosphate</name>
        <dbReference type="ChEBI" id="CHEBI:58017"/>
    </ligand>
</feature>
<feature type="binding site" evidence="1">
    <location>
        <position position="167"/>
    </location>
    <ligand>
        <name>anthranilate</name>
        <dbReference type="ChEBI" id="CHEBI:16567"/>
        <label>2</label>
    </ligand>
</feature>
<feature type="binding site" evidence="1">
    <location>
        <position position="225"/>
    </location>
    <ligand>
        <name>Mg(2+)</name>
        <dbReference type="ChEBI" id="CHEBI:18420"/>
        <label>2</label>
    </ligand>
</feature>
<feature type="binding site" evidence="1">
    <location>
        <position position="226"/>
    </location>
    <ligand>
        <name>Mg(2+)</name>
        <dbReference type="ChEBI" id="CHEBI:18420"/>
        <label>1</label>
    </ligand>
</feature>
<feature type="binding site" evidence="1">
    <location>
        <position position="226"/>
    </location>
    <ligand>
        <name>Mg(2+)</name>
        <dbReference type="ChEBI" id="CHEBI:18420"/>
        <label>2</label>
    </ligand>
</feature>
<dbReference type="EC" id="2.4.2.18" evidence="1"/>
<dbReference type="EMBL" id="CP001091">
    <property type="protein sequence ID" value="ACE61875.1"/>
    <property type="molecule type" value="Genomic_DNA"/>
</dbReference>
<dbReference type="RefSeq" id="WP_005617641.1">
    <property type="nucleotide sequence ID" value="NC_010939.1"/>
</dbReference>
<dbReference type="SMR" id="B3GY52"/>
<dbReference type="KEGG" id="apa:APP7_1223"/>
<dbReference type="HOGENOM" id="CLU_034315_2_1_6"/>
<dbReference type="UniPathway" id="UPA00035">
    <property type="reaction ID" value="UER00041"/>
</dbReference>
<dbReference type="Proteomes" id="UP000001226">
    <property type="component" value="Chromosome"/>
</dbReference>
<dbReference type="GO" id="GO:0005829">
    <property type="term" value="C:cytosol"/>
    <property type="evidence" value="ECO:0007669"/>
    <property type="project" value="TreeGrafter"/>
</dbReference>
<dbReference type="GO" id="GO:0004048">
    <property type="term" value="F:anthranilate phosphoribosyltransferase activity"/>
    <property type="evidence" value="ECO:0007669"/>
    <property type="project" value="UniProtKB-UniRule"/>
</dbReference>
<dbReference type="GO" id="GO:0000287">
    <property type="term" value="F:magnesium ion binding"/>
    <property type="evidence" value="ECO:0007669"/>
    <property type="project" value="UniProtKB-UniRule"/>
</dbReference>
<dbReference type="GO" id="GO:0000162">
    <property type="term" value="P:L-tryptophan biosynthetic process"/>
    <property type="evidence" value="ECO:0007669"/>
    <property type="project" value="UniProtKB-UniRule"/>
</dbReference>
<dbReference type="FunFam" id="3.40.1030.10:FF:000002">
    <property type="entry name" value="Anthranilate phosphoribosyltransferase"/>
    <property type="match status" value="1"/>
</dbReference>
<dbReference type="Gene3D" id="3.40.1030.10">
    <property type="entry name" value="Nucleoside phosphorylase/phosphoribosyltransferase catalytic domain"/>
    <property type="match status" value="1"/>
</dbReference>
<dbReference type="Gene3D" id="1.20.970.10">
    <property type="entry name" value="Transferase, Pyrimidine Nucleoside Phosphorylase, Chain C"/>
    <property type="match status" value="1"/>
</dbReference>
<dbReference type="HAMAP" id="MF_00211">
    <property type="entry name" value="TrpD"/>
    <property type="match status" value="1"/>
</dbReference>
<dbReference type="InterPro" id="IPR005940">
    <property type="entry name" value="Anthranilate_Pribosyl_Tfrase"/>
</dbReference>
<dbReference type="InterPro" id="IPR000312">
    <property type="entry name" value="Glycosyl_Trfase_fam3"/>
</dbReference>
<dbReference type="InterPro" id="IPR017459">
    <property type="entry name" value="Glycosyl_Trfase_fam3_N_dom"/>
</dbReference>
<dbReference type="InterPro" id="IPR036320">
    <property type="entry name" value="Glycosyl_Trfase_fam3_N_dom_sf"/>
</dbReference>
<dbReference type="InterPro" id="IPR035902">
    <property type="entry name" value="Nuc_phospho_transferase"/>
</dbReference>
<dbReference type="NCBIfam" id="TIGR01245">
    <property type="entry name" value="trpD"/>
    <property type="match status" value="1"/>
</dbReference>
<dbReference type="PANTHER" id="PTHR43285">
    <property type="entry name" value="ANTHRANILATE PHOSPHORIBOSYLTRANSFERASE"/>
    <property type="match status" value="1"/>
</dbReference>
<dbReference type="PANTHER" id="PTHR43285:SF2">
    <property type="entry name" value="ANTHRANILATE PHOSPHORIBOSYLTRANSFERASE"/>
    <property type="match status" value="1"/>
</dbReference>
<dbReference type="Pfam" id="PF02885">
    <property type="entry name" value="Glycos_trans_3N"/>
    <property type="match status" value="1"/>
</dbReference>
<dbReference type="Pfam" id="PF00591">
    <property type="entry name" value="Glycos_transf_3"/>
    <property type="match status" value="1"/>
</dbReference>
<dbReference type="SUPFAM" id="SSF52418">
    <property type="entry name" value="Nucleoside phosphorylase/phosphoribosyltransferase catalytic domain"/>
    <property type="match status" value="1"/>
</dbReference>
<dbReference type="SUPFAM" id="SSF47648">
    <property type="entry name" value="Nucleoside phosphorylase/phosphoribosyltransferase N-terminal domain"/>
    <property type="match status" value="1"/>
</dbReference>
<keyword id="KW-0028">Amino-acid biosynthesis</keyword>
<keyword id="KW-0057">Aromatic amino acid biosynthesis</keyword>
<keyword id="KW-0328">Glycosyltransferase</keyword>
<keyword id="KW-0460">Magnesium</keyword>
<keyword id="KW-0479">Metal-binding</keyword>
<keyword id="KW-0808">Transferase</keyword>
<keyword id="KW-0822">Tryptophan biosynthesis</keyword>